<accession>B4U0S7</accession>
<comment type="function">
    <text evidence="1">RNaseP catalyzes the removal of the 5'-leader sequence from pre-tRNA to produce the mature 5'-terminus. It can also cleave other RNA substrates such as 4.5S RNA. The protein component plays an auxiliary but essential role in vivo by binding to the 5'-leader sequence and broadening the substrate specificity of the ribozyme.</text>
</comment>
<comment type="catalytic activity">
    <reaction evidence="1">
        <text>Endonucleolytic cleavage of RNA, removing 5'-extranucleotides from tRNA precursor.</text>
        <dbReference type="EC" id="3.1.26.5"/>
    </reaction>
</comment>
<comment type="subunit">
    <text evidence="1">Consists of a catalytic RNA component (M1 or rnpB) and a protein subunit.</text>
</comment>
<comment type="similarity">
    <text evidence="1">Belongs to the RnpA family.</text>
</comment>
<dbReference type="EC" id="3.1.26.5" evidence="1"/>
<dbReference type="EMBL" id="CP001129">
    <property type="protein sequence ID" value="ACG61614.1"/>
    <property type="molecule type" value="Genomic_DNA"/>
</dbReference>
<dbReference type="RefSeq" id="WP_012514896.1">
    <property type="nucleotide sequence ID" value="NC_011134.1"/>
</dbReference>
<dbReference type="SMR" id="B4U0S7"/>
<dbReference type="GeneID" id="83704095"/>
<dbReference type="KEGG" id="sez:Sez_0236"/>
<dbReference type="HOGENOM" id="CLU_117179_9_1_9"/>
<dbReference type="Proteomes" id="UP000001873">
    <property type="component" value="Chromosome"/>
</dbReference>
<dbReference type="GO" id="GO:0030677">
    <property type="term" value="C:ribonuclease P complex"/>
    <property type="evidence" value="ECO:0007669"/>
    <property type="project" value="TreeGrafter"/>
</dbReference>
<dbReference type="GO" id="GO:0042781">
    <property type="term" value="F:3'-tRNA processing endoribonuclease activity"/>
    <property type="evidence" value="ECO:0007669"/>
    <property type="project" value="TreeGrafter"/>
</dbReference>
<dbReference type="GO" id="GO:0004526">
    <property type="term" value="F:ribonuclease P activity"/>
    <property type="evidence" value="ECO:0007669"/>
    <property type="project" value="UniProtKB-UniRule"/>
</dbReference>
<dbReference type="GO" id="GO:0000049">
    <property type="term" value="F:tRNA binding"/>
    <property type="evidence" value="ECO:0007669"/>
    <property type="project" value="UniProtKB-UniRule"/>
</dbReference>
<dbReference type="GO" id="GO:0001682">
    <property type="term" value="P:tRNA 5'-leader removal"/>
    <property type="evidence" value="ECO:0007669"/>
    <property type="project" value="UniProtKB-UniRule"/>
</dbReference>
<dbReference type="FunFam" id="3.30.230.10:FF:000021">
    <property type="entry name" value="Ribonuclease P protein component"/>
    <property type="match status" value="1"/>
</dbReference>
<dbReference type="Gene3D" id="3.30.230.10">
    <property type="match status" value="1"/>
</dbReference>
<dbReference type="HAMAP" id="MF_00227">
    <property type="entry name" value="RNase_P"/>
    <property type="match status" value="1"/>
</dbReference>
<dbReference type="InterPro" id="IPR020568">
    <property type="entry name" value="Ribosomal_Su5_D2-typ_SF"/>
</dbReference>
<dbReference type="InterPro" id="IPR014721">
    <property type="entry name" value="Ribsml_uS5_D2-typ_fold_subgr"/>
</dbReference>
<dbReference type="InterPro" id="IPR000100">
    <property type="entry name" value="RNase_P"/>
</dbReference>
<dbReference type="InterPro" id="IPR020539">
    <property type="entry name" value="RNase_P_CS"/>
</dbReference>
<dbReference type="NCBIfam" id="TIGR00188">
    <property type="entry name" value="rnpA"/>
    <property type="match status" value="1"/>
</dbReference>
<dbReference type="PANTHER" id="PTHR33992">
    <property type="entry name" value="RIBONUCLEASE P PROTEIN COMPONENT"/>
    <property type="match status" value="1"/>
</dbReference>
<dbReference type="PANTHER" id="PTHR33992:SF1">
    <property type="entry name" value="RIBONUCLEASE P PROTEIN COMPONENT"/>
    <property type="match status" value="1"/>
</dbReference>
<dbReference type="Pfam" id="PF00825">
    <property type="entry name" value="Ribonuclease_P"/>
    <property type="match status" value="1"/>
</dbReference>
<dbReference type="SUPFAM" id="SSF54211">
    <property type="entry name" value="Ribosomal protein S5 domain 2-like"/>
    <property type="match status" value="1"/>
</dbReference>
<dbReference type="PROSITE" id="PS00648">
    <property type="entry name" value="RIBONUCLEASE_P"/>
    <property type="match status" value="1"/>
</dbReference>
<sequence>MKKSYRVKREKDFQAIFKLGQSMANRKFVIYHLKGEHKHFRAGISVGKKLGNAVTRNAVKRKIRHVLMELGDHLKTEDFVVIARRGAEELDYQAVKQNLHHVLKLAKLLEEGFEIEKKS</sequence>
<gene>
    <name evidence="1" type="primary">rnpA</name>
    <name type="ordered locus">Sez_0236</name>
</gene>
<organism>
    <name type="scientific">Streptococcus equi subsp. zooepidemicus (strain MGCS10565)</name>
    <dbReference type="NCBI Taxonomy" id="552526"/>
    <lineage>
        <taxon>Bacteria</taxon>
        <taxon>Bacillati</taxon>
        <taxon>Bacillota</taxon>
        <taxon>Bacilli</taxon>
        <taxon>Lactobacillales</taxon>
        <taxon>Streptococcaceae</taxon>
        <taxon>Streptococcus</taxon>
    </lineage>
</organism>
<reference key="1">
    <citation type="journal article" date="2008" name="PLoS ONE">
        <title>Genome sequence of a lancefield group C Streptococcus zooepidemicus strain causing epidemic nephritis: new information about an old disease.</title>
        <authorList>
            <person name="Beres S.B."/>
            <person name="Sesso R."/>
            <person name="Pinto S.W.L."/>
            <person name="Hoe N.P."/>
            <person name="Porcella S.F."/>
            <person name="Deleo F.R."/>
            <person name="Musser J.M."/>
        </authorList>
    </citation>
    <scope>NUCLEOTIDE SEQUENCE [LARGE SCALE GENOMIC DNA]</scope>
    <source>
        <strain>MGCS10565</strain>
    </source>
</reference>
<keyword id="KW-0255">Endonuclease</keyword>
<keyword id="KW-0378">Hydrolase</keyword>
<keyword id="KW-0540">Nuclease</keyword>
<keyword id="KW-0694">RNA-binding</keyword>
<keyword id="KW-0819">tRNA processing</keyword>
<protein>
    <recommendedName>
        <fullName evidence="1">Ribonuclease P protein component</fullName>
        <shortName evidence="1">RNase P protein</shortName>
        <shortName evidence="1">RNaseP protein</shortName>
        <ecNumber evidence="1">3.1.26.5</ecNumber>
    </recommendedName>
    <alternativeName>
        <fullName evidence="1">Protein C5</fullName>
    </alternativeName>
</protein>
<proteinExistence type="inferred from homology"/>
<evidence type="ECO:0000255" key="1">
    <source>
        <dbReference type="HAMAP-Rule" id="MF_00227"/>
    </source>
</evidence>
<name>RNPA_STREM</name>
<feature type="chain" id="PRO_1000100394" description="Ribonuclease P protein component">
    <location>
        <begin position="1"/>
        <end position="119"/>
    </location>
</feature>